<accession>Q4V7C7</accession>
<accession>A9CM89</accession>
<accession>A9CM90</accession>
<protein>
    <recommendedName>
        <fullName>Actin-related protein 3</fullName>
    </recommendedName>
    <alternativeName>
        <fullName>Actin-like protein 3</fullName>
    </alternativeName>
</protein>
<gene>
    <name type="primary">Actr3</name>
    <name type="synonym">Arp3</name>
</gene>
<organism>
    <name type="scientific">Rattus norvegicus</name>
    <name type="common">Rat</name>
    <dbReference type="NCBI Taxonomy" id="10116"/>
    <lineage>
        <taxon>Eukaryota</taxon>
        <taxon>Metazoa</taxon>
        <taxon>Chordata</taxon>
        <taxon>Craniata</taxon>
        <taxon>Vertebrata</taxon>
        <taxon>Euteleostomi</taxon>
        <taxon>Mammalia</taxon>
        <taxon>Eutheria</taxon>
        <taxon>Euarchontoglires</taxon>
        <taxon>Glires</taxon>
        <taxon>Rodentia</taxon>
        <taxon>Myomorpha</taxon>
        <taxon>Muroidea</taxon>
        <taxon>Muridae</taxon>
        <taxon>Murinae</taxon>
        <taxon>Rattus</taxon>
    </lineage>
</organism>
<dbReference type="EMBL" id="AB292042">
    <property type="protein sequence ID" value="BAF94208.1"/>
    <property type="molecule type" value="mRNA"/>
</dbReference>
<dbReference type="EMBL" id="AB292043">
    <property type="protein sequence ID" value="BAF94209.1"/>
    <property type="molecule type" value="mRNA"/>
</dbReference>
<dbReference type="EMBL" id="AB294577">
    <property type="protein sequence ID" value="BAF94221.1"/>
    <property type="molecule type" value="Genomic_DNA"/>
</dbReference>
<dbReference type="EMBL" id="AB294578">
    <property type="protein sequence ID" value="BAF94241.1"/>
    <property type="molecule type" value="Genomic_DNA"/>
</dbReference>
<dbReference type="EMBL" id="BC098014">
    <property type="protein sequence ID" value="AAH98014.1"/>
    <property type="molecule type" value="mRNA"/>
</dbReference>
<dbReference type="RefSeq" id="NP_112330.1">
    <property type="nucleotide sequence ID" value="NM_031068.1"/>
</dbReference>
<dbReference type="SMR" id="Q4V7C7"/>
<dbReference type="BioGRID" id="249604">
    <property type="interactions" value="3"/>
</dbReference>
<dbReference type="FunCoup" id="Q4V7C7">
    <property type="interactions" value="3958"/>
</dbReference>
<dbReference type="IntAct" id="Q4V7C7">
    <property type="interactions" value="3"/>
</dbReference>
<dbReference type="MINT" id="Q4V7C7"/>
<dbReference type="STRING" id="10116.ENSRNOP00000071780"/>
<dbReference type="iPTMnet" id="Q4V7C7"/>
<dbReference type="PhosphoSitePlus" id="Q4V7C7"/>
<dbReference type="SwissPalm" id="Q4V7C7"/>
<dbReference type="jPOST" id="Q4V7C7"/>
<dbReference type="PaxDb" id="10116-ENSRNOP00000004520"/>
<dbReference type="Ensembl" id="ENSRNOT00000084552.2">
    <property type="protein sequence ID" value="ENSRNOP00000071780.2"/>
    <property type="gene ID" value="ENSRNOG00000003206.8"/>
</dbReference>
<dbReference type="GeneID" id="81732"/>
<dbReference type="KEGG" id="rno:81732"/>
<dbReference type="UCSC" id="RGD:71024">
    <property type="organism name" value="rat"/>
</dbReference>
<dbReference type="AGR" id="RGD:71024"/>
<dbReference type="CTD" id="10096"/>
<dbReference type="RGD" id="71024">
    <property type="gene designation" value="Actr3"/>
</dbReference>
<dbReference type="eggNOG" id="KOG0678">
    <property type="taxonomic scope" value="Eukaryota"/>
</dbReference>
<dbReference type="GeneTree" id="ENSGT00940000155065"/>
<dbReference type="HOGENOM" id="CLU_027965_3_0_1"/>
<dbReference type="InParanoid" id="Q4V7C7"/>
<dbReference type="OrthoDB" id="2015at9989"/>
<dbReference type="PhylomeDB" id="Q4V7C7"/>
<dbReference type="Reactome" id="R-RNO-2029482">
    <property type="pathway name" value="Regulation of actin dynamics for phagocytic cup formation"/>
</dbReference>
<dbReference type="Reactome" id="R-RNO-3928662">
    <property type="pathway name" value="EPHB-mediated forward signaling"/>
</dbReference>
<dbReference type="Reactome" id="R-RNO-5663213">
    <property type="pathway name" value="RHO GTPases Activate WASPs and WAVEs"/>
</dbReference>
<dbReference type="Reactome" id="R-RNO-8856828">
    <property type="pathway name" value="Clathrin-mediated endocytosis"/>
</dbReference>
<dbReference type="PRO" id="PR:Q4V7C7"/>
<dbReference type="Proteomes" id="UP000002494">
    <property type="component" value="Chromosome 13"/>
</dbReference>
<dbReference type="Bgee" id="ENSRNOG00000003206">
    <property type="expression patterns" value="Expressed in spleen and 19 other cell types or tissues"/>
</dbReference>
<dbReference type="ExpressionAtlas" id="Q4V7C7">
    <property type="expression patterns" value="baseline and differential"/>
</dbReference>
<dbReference type="GO" id="GO:0005884">
    <property type="term" value="C:actin filament"/>
    <property type="evidence" value="ECO:0000314"/>
    <property type="project" value="RGD"/>
</dbReference>
<dbReference type="GO" id="GO:0061831">
    <property type="term" value="C:apical ectoplasmic specialization"/>
    <property type="evidence" value="ECO:0000314"/>
    <property type="project" value="RGD"/>
</dbReference>
<dbReference type="GO" id="GO:0061828">
    <property type="term" value="C:apical tubulobulbar complex"/>
    <property type="evidence" value="ECO:0000314"/>
    <property type="project" value="RGD"/>
</dbReference>
<dbReference type="GO" id="GO:0005885">
    <property type="term" value="C:Arp2/3 protein complex"/>
    <property type="evidence" value="ECO:0000250"/>
    <property type="project" value="UniProtKB"/>
</dbReference>
<dbReference type="GO" id="GO:0061832">
    <property type="term" value="C:basal ectoplasmic specialization"/>
    <property type="evidence" value="ECO:0000314"/>
    <property type="project" value="RGD"/>
</dbReference>
<dbReference type="GO" id="GO:0005903">
    <property type="term" value="C:brush border"/>
    <property type="evidence" value="ECO:0000266"/>
    <property type="project" value="RGD"/>
</dbReference>
<dbReference type="GO" id="GO:0031252">
    <property type="term" value="C:cell leading edge"/>
    <property type="evidence" value="ECO:0000314"/>
    <property type="project" value="RGD"/>
</dbReference>
<dbReference type="GO" id="GO:0005911">
    <property type="term" value="C:cell-cell junction"/>
    <property type="evidence" value="ECO:0000314"/>
    <property type="project" value="RGD"/>
</dbReference>
<dbReference type="GO" id="GO:0061830">
    <property type="term" value="C:concave side of sperm head"/>
    <property type="evidence" value="ECO:0000314"/>
    <property type="project" value="RGD"/>
</dbReference>
<dbReference type="GO" id="GO:0005737">
    <property type="term" value="C:cytoplasm"/>
    <property type="evidence" value="ECO:0000266"/>
    <property type="project" value="RGD"/>
</dbReference>
<dbReference type="GO" id="GO:0060076">
    <property type="term" value="C:excitatory synapse"/>
    <property type="evidence" value="ECO:0000314"/>
    <property type="project" value="RGD"/>
</dbReference>
<dbReference type="GO" id="GO:0098978">
    <property type="term" value="C:glutamatergic synapse"/>
    <property type="evidence" value="ECO:0000314"/>
    <property type="project" value="SynGO"/>
</dbReference>
<dbReference type="GO" id="GO:0000139">
    <property type="term" value="C:Golgi membrane"/>
    <property type="evidence" value="ECO:0000314"/>
    <property type="project" value="RGD"/>
</dbReference>
<dbReference type="GO" id="GO:0030056">
    <property type="term" value="C:hemidesmosome"/>
    <property type="evidence" value="ECO:0000314"/>
    <property type="project" value="RGD"/>
</dbReference>
<dbReference type="GO" id="GO:0030027">
    <property type="term" value="C:lamellipodium"/>
    <property type="evidence" value="ECO:0000314"/>
    <property type="project" value="RGD"/>
</dbReference>
<dbReference type="GO" id="GO:0061851">
    <property type="term" value="C:leading edge of lamellipodium"/>
    <property type="evidence" value="ECO:0000314"/>
    <property type="project" value="RGD"/>
</dbReference>
<dbReference type="GO" id="GO:0005634">
    <property type="term" value="C:nucleus"/>
    <property type="evidence" value="ECO:0000250"/>
    <property type="project" value="UniProtKB"/>
</dbReference>
<dbReference type="GO" id="GO:0048471">
    <property type="term" value="C:perinuclear region of cytoplasm"/>
    <property type="evidence" value="ECO:0000314"/>
    <property type="project" value="RGD"/>
</dbReference>
<dbReference type="GO" id="GO:0002102">
    <property type="term" value="C:podosome"/>
    <property type="evidence" value="ECO:0000314"/>
    <property type="project" value="RGD"/>
</dbReference>
<dbReference type="GO" id="GO:0061825">
    <property type="term" value="C:podosome core"/>
    <property type="evidence" value="ECO:0000314"/>
    <property type="project" value="RGD"/>
</dbReference>
<dbReference type="GO" id="GO:0098794">
    <property type="term" value="C:postsynapse"/>
    <property type="evidence" value="ECO:0000314"/>
    <property type="project" value="SynGO"/>
</dbReference>
<dbReference type="GO" id="GO:0001726">
    <property type="term" value="C:ruffle"/>
    <property type="evidence" value="ECO:0000314"/>
    <property type="project" value="RGD"/>
</dbReference>
<dbReference type="GO" id="GO:0035861">
    <property type="term" value="C:site of double-strand break"/>
    <property type="evidence" value="ECO:0000250"/>
    <property type="project" value="UniProtKB"/>
</dbReference>
<dbReference type="GO" id="GO:0003779">
    <property type="term" value="F:actin binding"/>
    <property type="evidence" value="ECO:0000314"/>
    <property type="project" value="RGD"/>
</dbReference>
<dbReference type="GO" id="GO:0005524">
    <property type="term" value="F:ATP binding"/>
    <property type="evidence" value="ECO:0007669"/>
    <property type="project" value="UniProtKB-KW"/>
</dbReference>
<dbReference type="GO" id="GO:0051117">
    <property type="term" value="F:ATPase binding"/>
    <property type="evidence" value="ECO:0000353"/>
    <property type="project" value="RGD"/>
</dbReference>
<dbReference type="GO" id="GO:0005200">
    <property type="term" value="F:structural constituent of cytoskeleton"/>
    <property type="evidence" value="ECO:0000266"/>
    <property type="project" value="RGD"/>
</dbReference>
<dbReference type="GO" id="GO:0034314">
    <property type="term" value="P:Arp2/3 complex-mediated actin nucleation"/>
    <property type="evidence" value="ECO:0000250"/>
    <property type="project" value="UniProtKB"/>
</dbReference>
<dbReference type="GO" id="GO:0048708">
    <property type="term" value="P:astrocyte differentiation"/>
    <property type="evidence" value="ECO:0000315"/>
    <property type="project" value="RGD"/>
</dbReference>
<dbReference type="GO" id="GO:0008356">
    <property type="term" value="P:asymmetric cell division"/>
    <property type="evidence" value="ECO:0000266"/>
    <property type="project" value="RGD"/>
</dbReference>
<dbReference type="GO" id="GO:0071364">
    <property type="term" value="P:cellular response to epidermal growth factor stimulus"/>
    <property type="evidence" value="ECO:0000270"/>
    <property type="project" value="RGD"/>
</dbReference>
<dbReference type="GO" id="GO:0071347">
    <property type="term" value="P:cellular response to interleukin-1"/>
    <property type="evidence" value="ECO:0000270"/>
    <property type="project" value="RGD"/>
</dbReference>
<dbReference type="GO" id="GO:1905835">
    <property type="term" value="P:cellular response to pyrimidine ribonucleotide"/>
    <property type="evidence" value="ECO:0000270"/>
    <property type="project" value="RGD"/>
</dbReference>
<dbReference type="GO" id="GO:0071560">
    <property type="term" value="P:cellular response to transforming growth factor beta stimulus"/>
    <property type="evidence" value="ECO:0000314"/>
    <property type="project" value="RGD"/>
</dbReference>
<dbReference type="GO" id="GO:0035984">
    <property type="term" value="P:cellular response to trichostatin A"/>
    <property type="evidence" value="ECO:0000270"/>
    <property type="project" value="RGD"/>
</dbReference>
<dbReference type="GO" id="GO:1905837">
    <property type="term" value="P:cellular response to triterpenoid"/>
    <property type="evidence" value="ECO:0000270"/>
    <property type="project" value="RGD"/>
</dbReference>
<dbReference type="GO" id="GO:0071356">
    <property type="term" value="P:cellular response to tumor necrosis factor"/>
    <property type="evidence" value="ECO:0000314"/>
    <property type="project" value="RGD"/>
</dbReference>
<dbReference type="GO" id="GO:0071346">
    <property type="term" value="P:cellular response to type II interferon"/>
    <property type="evidence" value="ECO:0000266"/>
    <property type="project" value="RGD"/>
</dbReference>
<dbReference type="GO" id="GO:0060271">
    <property type="term" value="P:cilium assembly"/>
    <property type="evidence" value="ECO:0000250"/>
    <property type="project" value="UniProtKB"/>
</dbReference>
<dbReference type="GO" id="GO:0007163">
    <property type="term" value="P:establishment or maintenance of cell polarity"/>
    <property type="evidence" value="ECO:0000266"/>
    <property type="project" value="RGD"/>
</dbReference>
<dbReference type="GO" id="GO:0051321">
    <property type="term" value="P:meiotic cell cycle"/>
    <property type="evidence" value="ECO:0000266"/>
    <property type="project" value="RGD"/>
</dbReference>
<dbReference type="GO" id="GO:0016344">
    <property type="term" value="P:meiotic chromosome movement towards spindle pole"/>
    <property type="evidence" value="ECO:0000266"/>
    <property type="project" value="RGD"/>
</dbReference>
<dbReference type="GO" id="GO:0033206">
    <property type="term" value="P:meiotic cytokinesis"/>
    <property type="evidence" value="ECO:0000266"/>
    <property type="project" value="RGD"/>
</dbReference>
<dbReference type="GO" id="GO:0030517">
    <property type="term" value="P:negative regulation of axon extension"/>
    <property type="evidence" value="ECO:0000315"/>
    <property type="project" value="RGD"/>
</dbReference>
<dbReference type="GO" id="GO:1904171">
    <property type="term" value="P:negative regulation of bleb assembly"/>
    <property type="evidence" value="ECO:0000315"/>
    <property type="project" value="RGD"/>
</dbReference>
<dbReference type="GO" id="GO:0030838">
    <property type="term" value="P:positive regulation of actin filament polymerization"/>
    <property type="evidence" value="ECO:0000315"/>
    <property type="project" value="RGD"/>
</dbReference>
<dbReference type="GO" id="GO:0048711">
    <property type="term" value="P:positive regulation of astrocyte differentiation"/>
    <property type="evidence" value="ECO:0000315"/>
    <property type="project" value="RGD"/>
</dbReference>
<dbReference type="GO" id="GO:0050775">
    <property type="term" value="P:positive regulation of dendrite morphogenesis"/>
    <property type="evidence" value="ECO:0000315"/>
    <property type="project" value="RGD"/>
</dbReference>
<dbReference type="GO" id="GO:0061003">
    <property type="term" value="P:positive regulation of dendritic spine morphogenesis"/>
    <property type="evidence" value="ECO:0000315"/>
    <property type="project" value="RGD"/>
</dbReference>
<dbReference type="GO" id="GO:0010763">
    <property type="term" value="P:positive regulation of fibroblast migration"/>
    <property type="evidence" value="ECO:0000315"/>
    <property type="project" value="RGD"/>
</dbReference>
<dbReference type="GO" id="GO:0051491">
    <property type="term" value="P:positive regulation of filopodium assembly"/>
    <property type="evidence" value="ECO:0000315"/>
    <property type="project" value="RGD"/>
</dbReference>
<dbReference type="GO" id="GO:0010592">
    <property type="term" value="P:positive regulation of lamellipodium assembly"/>
    <property type="evidence" value="ECO:0000315"/>
    <property type="project" value="RGD"/>
</dbReference>
<dbReference type="GO" id="GO:0045666">
    <property type="term" value="P:positive regulation of neuron differentiation"/>
    <property type="evidence" value="ECO:0000315"/>
    <property type="project" value="RGD"/>
</dbReference>
<dbReference type="GO" id="GO:1903078">
    <property type="term" value="P:positive regulation of protein localization to plasma membrane"/>
    <property type="evidence" value="ECO:0000315"/>
    <property type="project" value="RGD"/>
</dbReference>
<dbReference type="GO" id="GO:0090314">
    <property type="term" value="P:positive regulation of protein targeting to membrane"/>
    <property type="evidence" value="ECO:0000315"/>
    <property type="project" value="RGD"/>
</dbReference>
<dbReference type="GO" id="GO:0051965">
    <property type="term" value="P:positive regulation of synapse assembly"/>
    <property type="evidence" value="ECO:0000315"/>
    <property type="project" value="RGD"/>
</dbReference>
<dbReference type="GO" id="GO:0045944">
    <property type="term" value="P:positive regulation of transcription by RNA polymerase II"/>
    <property type="evidence" value="ECO:0000250"/>
    <property type="project" value="UniProtKB"/>
</dbReference>
<dbReference type="GO" id="GO:0099173">
    <property type="term" value="P:postsynapse organization"/>
    <property type="evidence" value="ECO:0000314"/>
    <property type="project" value="SynGO"/>
</dbReference>
<dbReference type="GO" id="GO:0098974">
    <property type="term" value="P:postsynaptic actin cytoskeleton organization"/>
    <property type="evidence" value="ECO:0000314"/>
    <property type="project" value="SynGO"/>
</dbReference>
<dbReference type="GO" id="GO:0032956">
    <property type="term" value="P:regulation of actin cytoskeleton organization"/>
    <property type="evidence" value="ECO:0000315"/>
    <property type="project" value="RGD"/>
</dbReference>
<dbReference type="GO" id="GO:0043519">
    <property type="term" value="P:regulation of myosin II filament organization"/>
    <property type="evidence" value="ECO:0000315"/>
    <property type="project" value="RGD"/>
</dbReference>
<dbReference type="GO" id="GO:0032355">
    <property type="term" value="P:response to estradiol"/>
    <property type="evidence" value="ECO:0000270"/>
    <property type="project" value="RGD"/>
</dbReference>
<dbReference type="GO" id="GO:0071503">
    <property type="term" value="P:response to heparin"/>
    <property type="evidence" value="ECO:0000270"/>
    <property type="project" value="RGD"/>
</dbReference>
<dbReference type="GO" id="GO:0061843">
    <property type="term" value="P:Sertoli cell barrier remodeling"/>
    <property type="evidence" value="ECO:0000270"/>
    <property type="project" value="RGD"/>
</dbReference>
<dbReference type="GO" id="GO:0007283">
    <property type="term" value="P:spermatogenesis"/>
    <property type="evidence" value="ECO:0000270"/>
    <property type="project" value="RGD"/>
</dbReference>
<dbReference type="GO" id="GO:0051653">
    <property type="term" value="P:spindle localization"/>
    <property type="evidence" value="ECO:0000266"/>
    <property type="project" value="RGD"/>
</dbReference>
<dbReference type="CDD" id="cd10221">
    <property type="entry name" value="ASKHA_NBD_Arp3-like"/>
    <property type="match status" value="1"/>
</dbReference>
<dbReference type="FunFam" id="3.30.420.40:FF:000029">
    <property type="entry name" value="Actin-related protein 3"/>
    <property type="match status" value="1"/>
</dbReference>
<dbReference type="FunFam" id="3.30.420.40:FF:000315">
    <property type="entry name" value="Actin-related protein 3"/>
    <property type="match status" value="1"/>
</dbReference>
<dbReference type="FunFam" id="3.30.420.40:FF:000803">
    <property type="entry name" value="Actin-related protein 3"/>
    <property type="match status" value="1"/>
</dbReference>
<dbReference type="FunFam" id="3.90.640.10:FF:000006">
    <property type="entry name" value="Actin-related protein 3 (ARP3)"/>
    <property type="match status" value="1"/>
</dbReference>
<dbReference type="FunFam" id="2.30.36.70:FF:000002">
    <property type="entry name" value="actin-related protein 3 isoform X1"/>
    <property type="match status" value="1"/>
</dbReference>
<dbReference type="Gene3D" id="3.30.420.40">
    <property type="match status" value="2"/>
</dbReference>
<dbReference type="Gene3D" id="2.30.36.70">
    <property type="entry name" value="Actin, Chain A, domain 2"/>
    <property type="match status" value="1"/>
</dbReference>
<dbReference type="Gene3D" id="3.90.640.10">
    <property type="entry name" value="Actin, Chain A, domain 4"/>
    <property type="match status" value="1"/>
</dbReference>
<dbReference type="InterPro" id="IPR004000">
    <property type="entry name" value="Actin"/>
</dbReference>
<dbReference type="InterPro" id="IPR020902">
    <property type="entry name" value="Actin/actin-like_CS"/>
</dbReference>
<dbReference type="InterPro" id="IPR043129">
    <property type="entry name" value="ATPase_NBD"/>
</dbReference>
<dbReference type="PANTHER" id="PTHR11937">
    <property type="entry name" value="ACTIN"/>
    <property type="match status" value="1"/>
</dbReference>
<dbReference type="Pfam" id="PF00022">
    <property type="entry name" value="Actin"/>
    <property type="match status" value="2"/>
</dbReference>
<dbReference type="SMART" id="SM00268">
    <property type="entry name" value="ACTIN"/>
    <property type="match status" value="1"/>
</dbReference>
<dbReference type="SUPFAM" id="SSF53067">
    <property type="entry name" value="Actin-like ATPase domain"/>
    <property type="match status" value="2"/>
</dbReference>
<dbReference type="PROSITE" id="PS01132">
    <property type="entry name" value="ACTINS_ACT_LIKE"/>
    <property type="match status" value="1"/>
</dbReference>
<comment type="function">
    <text evidence="1">ATP-binding component of the Arp2/3 complex, a multiprotein complex that mediates actin polymerization upon stimulation by nucleation-promoting factor (NPF). The Arp2/3 complex mediates the formation of branched actin networks in the cytoplasm, providing the force for cell motility. Seems to contact the pointed end of the daughter actin filament. In podocytes, required for the formation of lamellipodia downstream of AVIL and PLCE1 regulation. In addition to its role in the cytoplasmic cytoskeleton, the Arp2/3 complex also promotes actin polymerization in the nucleus, thereby regulating gene transcription and repair of damaged DNA. The Arp2/3 complex promotes homologous recombination (HR) repair in response to DNA damage by promoting nuclear actin polymerization, leading to drive motility of double-strand breaks (DSBs). Plays a role in ciliogenesis.</text>
</comment>
<comment type="subunit">
    <text evidence="1">Component of the Arp2/3 complex composed of ACTR2/ARP2, ACTR3/ARP3, ARPC1B/p41-ARC, ARPC2/p34-ARC, ARPC3/p21-ARC, ARPC4/p20-ARC and ARPC5/p16-ARC. Interacts with WHDC1. Interacts weakly with MEFV. Interacts with AVIL.</text>
</comment>
<comment type="subcellular location">
    <subcellularLocation>
        <location evidence="3">Cytoplasm</location>
        <location evidence="3">Cytoskeleton</location>
    </subcellularLocation>
    <subcellularLocation>
        <location evidence="1">Cell projection</location>
    </subcellularLocation>
    <subcellularLocation>
        <location evidence="1">Nucleus</location>
    </subcellularLocation>
    <text evidence="1">In pre-apoptotic cells, colocalizes with MEFV in large specks (pyroptosomes).</text>
</comment>
<comment type="tissue specificity">
    <text evidence="2">Detected in brain and kidney glomeruli (at protein level) (PubMed:18064521). Detected in kidney, lung and spleen (PubMed:18064521).</text>
</comment>
<comment type="similarity">
    <text evidence="4">Belongs to the actin family. ARP3 subfamily.</text>
</comment>
<evidence type="ECO:0000250" key="1">
    <source>
        <dbReference type="UniProtKB" id="P61158"/>
    </source>
</evidence>
<evidence type="ECO:0000269" key="2">
    <source>
    </source>
</evidence>
<evidence type="ECO:0000269" key="3">
    <source>
    </source>
</evidence>
<evidence type="ECO:0000305" key="4"/>
<proteinExistence type="evidence at protein level"/>
<name>ARP3_RAT</name>
<keyword id="KW-0007">Acetylation</keyword>
<keyword id="KW-0009">Actin-binding</keyword>
<keyword id="KW-0067">ATP-binding</keyword>
<keyword id="KW-0966">Cell projection</keyword>
<keyword id="KW-0970">Cilium biogenesis/degradation</keyword>
<keyword id="KW-0963">Cytoplasm</keyword>
<keyword id="KW-0206">Cytoskeleton</keyword>
<keyword id="KW-0547">Nucleotide-binding</keyword>
<keyword id="KW-0539">Nucleus</keyword>
<keyword id="KW-1185">Reference proteome</keyword>
<feature type="initiator methionine" description="Removed" evidence="1">
    <location>
        <position position="1"/>
    </location>
</feature>
<feature type="chain" id="PRO_0000342356" description="Actin-related protein 3">
    <location>
        <begin position="2"/>
        <end position="418"/>
    </location>
</feature>
<feature type="modified residue" description="N-acetylalanine" evidence="1">
    <location>
        <position position="2"/>
    </location>
</feature>
<feature type="modified residue" description="N6-acetyllysine" evidence="1">
    <location>
        <position position="240"/>
    </location>
</feature>
<feature type="modified residue" description="N6-acetyllysine" evidence="1">
    <location>
        <position position="244"/>
    </location>
</feature>
<feature type="modified residue" description="N6-acetyllysine" evidence="1">
    <location>
        <position position="251"/>
    </location>
</feature>
<feature type="modified residue" description="N6-acetyllysine" evidence="1">
    <location>
        <position position="254"/>
    </location>
</feature>
<feature type="sequence variant" evidence="2">
    <original>L</original>
    <variation>F</variation>
    <location>
        <position position="111"/>
    </location>
</feature>
<reference key="1">
    <citation type="journal article" date="2008" name="Mamm. Genome">
        <title>Actin-related protein 3 (Arp3) is mutated in proteinuric BUF/Mna rats.</title>
        <authorList>
            <person name="Akiyama K."/>
            <person name="Morita H."/>
            <person name="Suetsugu S."/>
            <person name="Kuraba S."/>
            <person name="Numata Y."/>
            <person name="Yamamoto Y."/>
            <person name="Inui K."/>
            <person name="Ideura T."/>
            <person name="Wakisaka N."/>
            <person name="Nakano K."/>
            <person name="Oniki H."/>
            <person name="Takenawa T."/>
            <person name="Matsuyama M."/>
            <person name="Yoshimura A."/>
        </authorList>
    </citation>
    <scope>NUCLEOTIDE SEQUENCE [MRNA]</scope>
    <scope>VARIANT PHE-111</scope>
    <scope>TISSUE SPECIFICITY</scope>
    <source>
        <strain>Buffalo/Mna</strain>
        <strain>Wistar Kyoto/Ncrj</strain>
        <tissue>Kidney</tissue>
    </source>
</reference>
<reference key="2">
    <citation type="journal article" date="2004" name="Genome Res.">
        <title>The status, quality, and expansion of the NIH full-length cDNA project: the Mammalian Gene Collection (MGC).</title>
        <authorList>
            <consortium name="The MGC Project Team"/>
        </authorList>
    </citation>
    <scope>NUCLEOTIDE SEQUENCE [LARGE SCALE MRNA]</scope>
    <source>
        <strain>Brown Norway</strain>
        <tissue>Testis</tissue>
    </source>
</reference>
<reference key="3">
    <citation type="journal article" date="2009" name="Proteomics">
        <title>Proteome profile of the mature rat olfactory bulb.</title>
        <authorList>
            <person name="Maurya D.K."/>
            <person name="Sundaram C.S."/>
            <person name="Bhargava P."/>
        </authorList>
    </citation>
    <scope>IDENTIFICATION BY MASS SPECTROMETRY</scope>
    <scope>SUBCELLULAR LOCATION</scope>
</reference>
<sequence length="418" mass="47357">MAGRLPACVVDCGTGYTKLGYAGNTEPQFIIPSCIAIKESAKVGDQAQRRVMKGVDDLDFFIGDEAIEKPTYATKWPIRHGIVEDWDLMERFMEQVIFKYLRAEPEDHYFLLTEPPLNTPENREYTAEIMFESFNVPGLYIAVQAVLALAASWTSRQVGERTLTGTVIDSGDGVTHVIPVAEGYVIGSCIKHIPIAGRDITYFIQQLLRDREVGIPPEQSLETAKAVKERYSYVCPDLVKEFNKYDTDGSKWIKQYTGVNAISKKEFSIDVGYERFLGPEIFFHPEFANPDFTQPISEVVDEVIQNCPIDVRRPLYKNIVLSGGSTMFRDFGRRLQRDLKRTVDARLKLSEELSGGRLKPKPIDVQVITHHMQRYAVWFGGSMLASTPEFYQVCHTKKDYEEIGPSICRHNPVFGVMS</sequence>